<comment type="alternative products">
    <event type="alternative splicing"/>
    <isoform>
        <id>Q8WP21-1</id>
        <name>1</name>
        <sequence type="displayed"/>
    </isoform>
    <isoform>
        <id>Q8WP21-2</id>
        <name>2</name>
        <sequence type="described" ref="VSP_034466 VSP_034467"/>
    </isoform>
    <isoform>
        <id>Q8WP21-3</id>
        <name>3</name>
        <sequence type="described" ref="VSP_034465 VSP_034468"/>
    </isoform>
</comment>
<comment type="similarity">
    <text evidence="4">Belongs to the AKNA family.</text>
</comment>
<comment type="sequence caution" evidence="4">
    <conflict type="frameshift">
        <sequence resource="EMBL-CDS" id="BAB62976"/>
    </conflict>
</comment>
<sequence>MDEADFSEDTTYKQEDLPYDGDLSPIKICNDYSFTSKNDAFEVSSQIIFIADDPQEKAMHNETCGNTAMTMPLGKTTENAANKKDEKEKQCTAALHIPANEGDASKSSISDILLHHLSKEPFLRGQGIDCETLPEISNADSFEEEAIIKSIISCCNKNSWPKEQTLELTDQLNPKKDGENSNKPGSPTMTEENTSDLEETVAAGDSSHQENVNILTKTKGPGDKQNSYQGQAPPKQHTEKASSGNRFKYGQGQVHYQLPDFSKIAPEVKNPKNNIINKPLAIAKQVSFSKLREKPAVVQDILETMPESNCVEKQHQEQKGEITEPSQQIQMEPTVHIHQELLTGIESEASISKLSPTSQKGTSSSSSYIFQKISQGKQMCQKLKEQTDQLKTKVREFSKRIKQESPYHLQDKKLVLEKLQGHLELLEQNFLATKDKHLTLQQQVHKHESTIVSDFDPERKVEGEIFKLEMLLEDVKDKVDESKYTSAPSLPVSSPVTLDDLASTSSSLSNEVPEEHPGHPPGPRGSGGSEATGTPQGGPQEAPKEELCELTPQIYLNGHYGDATVQNQPDQVAMRLSSNSGEDPRCTPGRQDCAETTAPSPSCAFCRRLLEWKPKVEKKGHRRIHCGRFSTVHEKAPHSDSTPNSDTGHSFCSDSGTEMQGNKCQDCGTKIPTSRRACRKEPPKEFHYRHNTPGENYSNHSKRGAFVRPHSLHESKNSSPSLASPFCCPGLMYSPDTSKSSPTPGWQEAELGLENMKSQ</sequence>
<dbReference type="EMBL" id="AB070031">
    <property type="protein sequence ID" value="BAB62976.1"/>
    <property type="status" value="ALT_FRAME"/>
    <property type="molecule type" value="mRNA"/>
</dbReference>
<dbReference type="EMBL" id="AB072760">
    <property type="protein sequence ID" value="BAB69729.1"/>
    <property type="molecule type" value="mRNA"/>
</dbReference>
<dbReference type="EMBL" id="AB074456">
    <property type="protein sequence ID" value="BAB72087.1"/>
    <property type="molecule type" value="mRNA"/>
</dbReference>
<dbReference type="SMR" id="Q8WP21"/>
<dbReference type="STRING" id="9541.ENSMFAP00000024893"/>
<dbReference type="eggNOG" id="ENOG502RZDD">
    <property type="taxonomic scope" value="Eukaryota"/>
</dbReference>
<dbReference type="Proteomes" id="UP000233100">
    <property type="component" value="Unplaced"/>
</dbReference>
<dbReference type="InterPro" id="IPR052655">
    <property type="entry name" value="AKNA_Centrosome-Trans_reg"/>
</dbReference>
<dbReference type="InterPro" id="IPR022150">
    <property type="entry name" value="AKNA_dom"/>
</dbReference>
<dbReference type="PANTHER" id="PTHR21510">
    <property type="entry name" value="AKNA DOMAIN-CONTAINING PROTEIN"/>
    <property type="match status" value="1"/>
</dbReference>
<dbReference type="PANTHER" id="PTHR21510:SF16">
    <property type="entry name" value="PROTEIN AKNAD1"/>
    <property type="match status" value="1"/>
</dbReference>
<dbReference type="Pfam" id="PF12443">
    <property type="entry name" value="AKNA"/>
    <property type="match status" value="1"/>
</dbReference>
<feature type="chain" id="PRO_0000342471" description="Protein AKNAD1">
    <location>
        <begin position="1"/>
        <end position="759"/>
    </location>
</feature>
<feature type="region of interest" description="Disordered" evidence="2">
    <location>
        <begin position="169"/>
        <end position="246"/>
    </location>
</feature>
<feature type="region of interest" description="Disordered" evidence="2">
    <location>
        <begin position="484"/>
        <end position="543"/>
    </location>
</feature>
<feature type="region of interest" description="Disordered" evidence="2">
    <location>
        <begin position="634"/>
        <end position="654"/>
    </location>
</feature>
<feature type="region of interest" description="Disordered" evidence="2">
    <location>
        <begin position="678"/>
        <end position="723"/>
    </location>
</feature>
<feature type="region of interest" description="Disordered" evidence="2">
    <location>
        <begin position="735"/>
        <end position="759"/>
    </location>
</feature>
<feature type="coiled-coil region" evidence="1">
    <location>
        <begin position="371"/>
        <end position="482"/>
    </location>
</feature>
<feature type="compositionally biased region" description="Polar residues" evidence="2">
    <location>
        <begin position="181"/>
        <end position="192"/>
    </location>
</feature>
<feature type="compositionally biased region" description="Polar residues" evidence="2">
    <location>
        <begin position="484"/>
        <end position="496"/>
    </location>
</feature>
<feature type="compositionally biased region" description="Low complexity" evidence="2">
    <location>
        <begin position="497"/>
        <end position="509"/>
    </location>
</feature>
<feature type="compositionally biased region" description="Polar residues" evidence="2">
    <location>
        <begin position="639"/>
        <end position="654"/>
    </location>
</feature>
<feature type="compositionally biased region" description="Basic and acidic residues" evidence="2">
    <location>
        <begin position="679"/>
        <end position="688"/>
    </location>
</feature>
<feature type="compositionally biased region" description="Polar residues" evidence="2">
    <location>
        <begin position="735"/>
        <end position="744"/>
    </location>
</feature>
<feature type="splice variant" id="VSP_034465" description="In isoform 3." evidence="3">
    <location>
        <begin position="511"/>
        <end position="540"/>
    </location>
</feature>
<feature type="splice variant" id="VSP_034466" description="In isoform 2." evidence="3">
    <original>I</original>
    <variation>MRTPGALQEGRIVQRRRHPVPAVPSVAGSLNGSQKWRKRATEGSTVEDFQLSMKRHHIQIPLPILIQDTASVLILALKCRVTNVRTVALRFLPPEEPAERNHLKNFIIDTTLQERITQIIAKEVPLSSPILYMKAKTLHPVSTSPA</variation>
    <location>
        <position position="554"/>
    </location>
</feature>
<feature type="splice variant" id="VSP_034467" description="In isoform 2." evidence="3">
    <location>
        <begin position="555"/>
        <end position="759"/>
    </location>
</feature>
<feature type="splice variant" id="VSP_034468" description="In isoform 3." evidence="3">
    <original>SLASPFCCPG</original>
    <variation>C</variation>
    <location>
        <begin position="721"/>
        <end position="730"/>
    </location>
</feature>
<feature type="sequence conflict" description="In Ref. 1; BAB62976." evidence="4" ref="1">
    <original>L</original>
    <variation>F</variation>
    <location>
        <position position="114"/>
    </location>
</feature>
<feature type="sequence conflict" description="In Ref. 1; BAB62976/BAB69729." evidence="4" ref="1">
    <original>P</original>
    <variation>Q</variation>
    <location>
        <position position="234"/>
    </location>
</feature>
<feature type="sequence conflict" description="In Ref. 1; BAB62976/BAB69729." evidence="4" ref="1">
    <original>R</original>
    <variation>Q</variation>
    <location>
        <position position="395"/>
    </location>
</feature>
<feature type="sequence conflict" description="In Ref. 1; BAB62976." evidence="4" ref="1">
    <original>L</original>
    <variation>P</variation>
    <location>
        <position position="472"/>
    </location>
</feature>
<feature type="sequence conflict" description="In Ref. 1; BAB62976/BAB69729." evidence="4" ref="1">
    <original>V</original>
    <variation>M</variation>
    <location>
        <position position="479"/>
    </location>
</feature>
<feature type="sequence conflict" description="In Ref. 1; BAB62976." evidence="4" ref="1">
    <original>H</original>
    <variation>Y</variation>
    <location>
        <position position="690"/>
    </location>
</feature>
<feature type="sequence conflict" description="In Ref. 1; BAB62976." evidence="4" ref="1">
    <original>R</original>
    <variation>Q</variation>
    <location>
        <position position="708"/>
    </location>
</feature>
<evidence type="ECO:0000255" key="1"/>
<evidence type="ECO:0000256" key="2">
    <source>
        <dbReference type="SAM" id="MobiDB-lite"/>
    </source>
</evidence>
<evidence type="ECO:0000303" key="3">
    <source>
    </source>
</evidence>
<evidence type="ECO:0000305" key="4"/>
<organism>
    <name type="scientific">Macaca fascicularis</name>
    <name type="common">Crab-eating macaque</name>
    <name type="synonym">Cynomolgus monkey</name>
    <dbReference type="NCBI Taxonomy" id="9541"/>
    <lineage>
        <taxon>Eukaryota</taxon>
        <taxon>Metazoa</taxon>
        <taxon>Chordata</taxon>
        <taxon>Craniata</taxon>
        <taxon>Vertebrata</taxon>
        <taxon>Euteleostomi</taxon>
        <taxon>Mammalia</taxon>
        <taxon>Eutheria</taxon>
        <taxon>Euarchontoglires</taxon>
        <taxon>Primates</taxon>
        <taxon>Haplorrhini</taxon>
        <taxon>Catarrhini</taxon>
        <taxon>Cercopithecidae</taxon>
        <taxon>Cercopithecinae</taxon>
        <taxon>Macaca</taxon>
    </lineage>
</organism>
<proteinExistence type="evidence at transcript level"/>
<name>AKND1_MACFA</name>
<protein>
    <recommendedName>
        <fullName>Protein AKNAD1</fullName>
    </recommendedName>
</protein>
<keyword id="KW-0025">Alternative splicing</keyword>
<keyword id="KW-0175">Coiled coil</keyword>
<keyword id="KW-1185">Reference proteome</keyword>
<accession>Q8WP21</accession>
<accession>Q95JZ6</accession>
<accession>Q95LM8</accession>
<reference key="1">
    <citation type="journal article" date="2002" name="BMC Genomics">
        <title>Cynomolgus monkey testicular cDNAs for discovery of novel human genes in the human genome sequence.</title>
        <authorList>
            <person name="Osada N."/>
            <person name="Hida M."/>
            <person name="Kusuda J."/>
            <person name="Tanuma R."/>
            <person name="Hirata M."/>
            <person name="Suto Y."/>
            <person name="Hirai M."/>
            <person name="Terao K."/>
            <person name="Sugano S."/>
            <person name="Hashimoto K."/>
        </authorList>
    </citation>
    <scope>NUCLEOTIDE SEQUENCE [LARGE SCALE MRNA] (ISOFORMS 1; 2 AND 3)</scope>
    <source>
        <tissue>Testis</tissue>
    </source>
</reference>
<gene>
    <name type="primary">AKNAD1</name>
    <name type="ORF">QtsA-11775</name>
    <name type="ORF">QtsA-19735</name>
    <name type="ORF">QtsA-21583</name>
</gene>